<sequence>MGKDEEEMRGEIEERLINEEYKIWKKNTPFLYDLVITHALEWPSLTVEWLPDREEPSGKDYSVQKMILGTHTSESEPNYLMLAQVQLPLDDTESEARQYDDDRSEFGGFGCATGKVQIIQQINHDGEVNRARYMPQNPFIIATKTVNAEVYVFDYSKHPSKPPLDGACNPDLKLRGHSSEGYGLSWSKFKQGHLLSGSDDAQICLWDINATPKNKSLDAQQIFKAHEGVVEDVAWHLRHEYLFGSVGDDQYLLIWDLRSPSASKPVQSVVAHSMEVNCLAFNPFNEWVVATGSTDKTVKLFDLRKLSTALHTFDSHKEEVFQVGWNPKNETILASCCLGRRLMVWDLSRIDEEQTVEDAEDGPPELLFIHGGHTSKISDFSWNPCEDWVISSVAEDNILQIWQMAENIYHDEDDAPGEEPSKAS</sequence>
<comment type="function">
    <text evidence="2 3 4 5 6 7 8 9 11">Core histone-binding subunit that may target chromatin assembly factors, chromatin remodeling factors and histone deacetylases to their histone substrates in a manner that is regulated by nucleosomal DNA. Component of several complexes which regulate chromatin metabolism. These include the chromatin assembly factor 1 (CAF-1) complex, which is required for chromatin assembly following DNA replication and DNA repair, and the fertilization independent seed (FIS) complex, a polycomb group protein complex which is required to maintain the transcriptionally repressive state of homeotic genes throughout development. Required for several aspects of plant development including normal leaf expansion, correct development of flowers, normal endosperm development, repression of parthenogenetic seed development and repression of floral homeotic genes in leaf tissue. Also required for the recruitment of chromosomal DNA into heterochromatic chromocenters. Also involved in regulation of imprinted genes. Acts together with RBR1 to repress the expression of MET1 during female gametogenesis. This in turn activates expression of the imprinted genes FIS2 and FWA.</text>
</comment>
<comment type="subunit">
    <text evidence="1 2 4 10 11 12 13">Binds directly to helix 1 of the histone fold of histone H4, a region that is not accessible when H4 is in chromatin (By similarity). Component of the chromatin assembly factor 1 (CAF-1) complex, composed of FAS1, FAS2 and MSI1. Component of the FIS complex which includes at least MEA, FIE, MIS1 and possibly FIS2. Interacts with EMF1. Component of the plant homeodomain / polycomb repressive complex 2 (PHD-PRC2) large complex during prolonged cold, composed of core PRC2 components (VRN2, EZA1, FIE and MSI1), and three related PHD finger proteins (VIL1, VIL2 and VIN3) that mediates histone H3 trimethylation on 'Lys-27' H3K27me3. Interacts with RBR1. Binds to ALP1 (PubMed:26642436).</text>
</comment>
<comment type="interaction">
    <interactant intactId="EBI-632891">
        <id>O22467</id>
    </interactant>
    <interactant intactId="EBI-8565056">
        <id>Q9M0V3-1</id>
        <label>DDB1A</label>
    </interactant>
    <organismsDiffer>false</organismsDiffer>
    <experiments>3</experiments>
</comment>
<comment type="interaction">
    <interactant intactId="EBI-632891">
        <id>O22467</id>
    </interactant>
    <interactant intactId="EBI-2128696">
        <id>Q8L6Y4</id>
        <label>EMF2</label>
    </interactant>
    <organismsDiffer>false</organismsDiffer>
    <experiments>4</experiments>
</comment>
<comment type="interaction">
    <interactant intactId="EBI-632891">
        <id>O22467</id>
    </interactant>
    <interactant intactId="EBI-307146">
        <id>Q9LT47</id>
        <label>FIE</label>
    </interactant>
    <organismsDiffer>false</organismsDiffer>
    <experiments>6</experiments>
</comment>
<comment type="interaction">
    <interactant intactId="EBI-632891">
        <id>O22467</id>
    </interactant>
    <interactant intactId="EBI-2309089">
        <id>Q946J8</id>
        <label>LHP1</label>
    </interactant>
    <organismsDiffer>false</organismsDiffer>
    <experiments>4</experiments>
</comment>
<comment type="interaction">
    <interactant intactId="EBI-632891">
        <id>O22467</id>
    </interactant>
    <interactant intactId="EBI-398590">
        <id>Q9LKZ3</id>
        <label>RBR1</label>
    </interactant>
    <organismsDiffer>false</organismsDiffer>
    <experiments>2</experiments>
</comment>
<comment type="subcellular location">
    <subcellularLocation>
        <location evidence="1">Nucleus</location>
    </subcellularLocation>
</comment>
<comment type="tissue specificity">
    <text evidence="3">Ubiquitously expressed. Strongly expressed in floral buds and flowers, the female gametophyte and the sporophytic tissue of the ovules. Also strongly expressed in developing embryos following fertilization.</text>
</comment>
<comment type="developmental stage">
    <text evidence="11">Expressed during female gametophyte development.</text>
</comment>
<comment type="domain">
    <text evidence="1">The DWD box is required for interaction with DDB1A.</text>
</comment>
<comment type="similarity">
    <text evidence="14">Belongs to the WD repeat RBAP46/RBAP48/MSI1 family.</text>
</comment>
<evidence type="ECO:0000250" key="1"/>
<evidence type="ECO:0000269" key="2">
    <source>
    </source>
</evidence>
<evidence type="ECO:0000269" key="3">
    <source>
    </source>
</evidence>
<evidence type="ECO:0000269" key="4">
    <source>
    </source>
</evidence>
<evidence type="ECO:0000269" key="5">
    <source>
    </source>
</evidence>
<evidence type="ECO:0000269" key="6">
    <source>
    </source>
</evidence>
<evidence type="ECO:0000269" key="7">
    <source>
    </source>
</evidence>
<evidence type="ECO:0000269" key="8">
    <source>
    </source>
</evidence>
<evidence type="ECO:0000269" key="9">
    <source>
    </source>
</evidence>
<evidence type="ECO:0000269" key="10">
    <source>
    </source>
</evidence>
<evidence type="ECO:0000269" key="11">
    <source>
    </source>
</evidence>
<evidence type="ECO:0000269" key="12">
    <source>
    </source>
</evidence>
<evidence type="ECO:0000269" key="13">
    <source>
    </source>
</evidence>
<evidence type="ECO:0000305" key="14"/>
<protein>
    <recommendedName>
        <fullName>Histone-binding protein MSI1</fullName>
    </recommendedName>
    <alternativeName>
        <fullName>CAF-1 p48 homolog</fullName>
    </alternativeName>
    <alternativeName>
        <fullName evidence="14">Chromatin assembly factor 1 subunit C</fullName>
        <shortName evidence="14">CAF-1 subunit C</shortName>
    </alternativeName>
    <alternativeName>
        <fullName>Protein MULTICOPY SUPPRESSOR OF IRA 1</fullName>
        <shortName>AtMSI1</shortName>
    </alternativeName>
    <alternativeName>
        <fullName>Protein medicis</fullName>
    </alternativeName>
    <alternativeName>
        <fullName>WD-40 repeat-containing protein MSI1</fullName>
    </alternativeName>
</protein>
<gene>
    <name type="primary">MSI1</name>
    <name type="ordered locus">At5g58230</name>
    <name type="ORF">MCK7.10</name>
</gene>
<feature type="chain" id="PRO_0000051080" description="Histone-binding protein MSI1">
    <location>
        <begin position="1"/>
        <end position="424"/>
    </location>
</feature>
<feature type="repeat" description="WD 1">
    <location>
        <begin position="123"/>
        <end position="163"/>
    </location>
</feature>
<feature type="repeat" description="WD 2">
    <location>
        <begin position="176"/>
        <end position="216"/>
    </location>
</feature>
<feature type="repeat" description="WD 3">
    <location>
        <begin position="225"/>
        <end position="265"/>
    </location>
</feature>
<feature type="repeat" description="WD 4">
    <location>
        <begin position="271"/>
        <end position="311"/>
    </location>
</feature>
<feature type="repeat" description="WD 5">
    <location>
        <begin position="315"/>
        <end position="355"/>
    </location>
</feature>
<feature type="repeat" description="WD 6">
    <location>
        <begin position="372"/>
        <end position="412"/>
    </location>
</feature>
<feature type="short sequence motif" description="DWD box">
    <location>
        <begin position="243"/>
        <end position="258"/>
    </location>
</feature>
<name>MSI1_ARATH</name>
<accession>O22467</accession>
<organism>
    <name type="scientific">Arabidopsis thaliana</name>
    <name type="common">Mouse-ear cress</name>
    <dbReference type="NCBI Taxonomy" id="3702"/>
    <lineage>
        <taxon>Eukaryota</taxon>
        <taxon>Viridiplantae</taxon>
        <taxon>Streptophyta</taxon>
        <taxon>Embryophyta</taxon>
        <taxon>Tracheophyta</taxon>
        <taxon>Spermatophyta</taxon>
        <taxon>Magnoliopsida</taxon>
        <taxon>eudicotyledons</taxon>
        <taxon>Gunneridae</taxon>
        <taxon>Pentapetalae</taxon>
        <taxon>rosids</taxon>
        <taxon>malvids</taxon>
        <taxon>Brassicales</taxon>
        <taxon>Brassicaceae</taxon>
        <taxon>Camelineae</taxon>
        <taxon>Arabidopsis</taxon>
    </lineage>
</organism>
<dbReference type="EMBL" id="AF016846">
    <property type="protein sequence ID" value="AAB70242.1"/>
    <property type="molecule type" value="mRNA"/>
</dbReference>
<dbReference type="EMBL" id="AB019228">
    <property type="protein sequence ID" value="BAA96914.1"/>
    <property type="molecule type" value="Genomic_DNA"/>
</dbReference>
<dbReference type="EMBL" id="CP002688">
    <property type="protein sequence ID" value="AED97021.1"/>
    <property type="molecule type" value="Genomic_DNA"/>
</dbReference>
<dbReference type="EMBL" id="AY059874">
    <property type="protein sequence ID" value="AAL24356.1"/>
    <property type="molecule type" value="mRNA"/>
</dbReference>
<dbReference type="EMBL" id="AY114646">
    <property type="protein sequence ID" value="AAM47965.1"/>
    <property type="molecule type" value="mRNA"/>
</dbReference>
<dbReference type="RefSeq" id="NP_200631.1">
    <property type="nucleotide sequence ID" value="NM_125208.3"/>
</dbReference>
<dbReference type="SMR" id="O22467"/>
<dbReference type="BioGRID" id="21179">
    <property type="interactions" value="68"/>
</dbReference>
<dbReference type="DIP" id="DIP-33481N"/>
<dbReference type="FunCoup" id="O22467">
    <property type="interactions" value="4709"/>
</dbReference>
<dbReference type="IntAct" id="O22467">
    <property type="interactions" value="36"/>
</dbReference>
<dbReference type="MINT" id="O22467"/>
<dbReference type="STRING" id="3702.O22467"/>
<dbReference type="PaxDb" id="3702-AT5G58230.1"/>
<dbReference type="ProteomicsDB" id="239004"/>
<dbReference type="EnsemblPlants" id="AT5G58230.1">
    <property type="protein sequence ID" value="AT5G58230.1"/>
    <property type="gene ID" value="AT5G58230"/>
</dbReference>
<dbReference type="GeneID" id="835935"/>
<dbReference type="Gramene" id="AT5G58230.1">
    <property type="protein sequence ID" value="AT5G58230.1"/>
    <property type="gene ID" value="AT5G58230"/>
</dbReference>
<dbReference type="KEGG" id="ath:AT5G58230"/>
<dbReference type="Araport" id="AT5G58230"/>
<dbReference type="TAIR" id="AT5G58230">
    <property type="gene designation" value="MSI1"/>
</dbReference>
<dbReference type="eggNOG" id="KOG0264">
    <property type="taxonomic scope" value="Eukaryota"/>
</dbReference>
<dbReference type="HOGENOM" id="CLU_020445_3_1_1"/>
<dbReference type="InParanoid" id="O22467"/>
<dbReference type="OMA" id="PHEEGCL"/>
<dbReference type="OrthoDB" id="427795at2759"/>
<dbReference type="PhylomeDB" id="O22467"/>
<dbReference type="PRO" id="PR:O22467"/>
<dbReference type="Proteomes" id="UP000006548">
    <property type="component" value="Chromosome 5"/>
</dbReference>
<dbReference type="ExpressionAtlas" id="O22467">
    <property type="expression patterns" value="baseline and differential"/>
</dbReference>
<dbReference type="GO" id="GO:0005677">
    <property type="term" value="C:chromatin silencing complex"/>
    <property type="evidence" value="ECO:0000314"/>
    <property type="project" value="UniProtKB"/>
</dbReference>
<dbReference type="GO" id="GO:0080008">
    <property type="term" value="C:Cul4-RING E3 ubiquitin ligase complex"/>
    <property type="evidence" value="ECO:0000250"/>
    <property type="project" value="TAIR"/>
</dbReference>
<dbReference type="GO" id="GO:0070176">
    <property type="term" value="C:DRM complex"/>
    <property type="evidence" value="ECO:0000314"/>
    <property type="project" value="TAIR"/>
</dbReference>
<dbReference type="GO" id="GO:0005634">
    <property type="term" value="C:nucleus"/>
    <property type="evidence" value="ECO:0000304"/>
    <property type="project" value="TAIR"/>
</dbReference>
<dbReference type="GO" id="GO:0032991">
    <property type="term" value="C:protein-containing complex"/>
    <property type="evidence" value="ECO:0000353"/>
    <property type="project" value="TAIR"/>
</dbReference>
<dbReference type="GO" id="GO:0006281">
    <property type="term" value="P:DNA repair"/>
    <property type="evidence" value="ECO:0007669"/>
    <property type="project" value="UniProtKB-KW"/>
</dbReference>
<dbReference type="GO" id="GO:0006260">
    <property type="term" value="P:DNA replication"/>
    <property type="evidence" value="ECO:0007669"/>
    <property type="project" value="UniProtKB-KW"/>
</dbReference>
<dbReference type="GO" id="GO:0009793">
    <property type="term" value="P:embryo development ending in seed dormancy"/>
    <property type="evidence" value="ECO:0000315"/>
    <property type="project" value="TAIR"/>
</dbReference>
<dbReference type="GO" id="GO:0009908">
    <property type="term" value="P:flower development"/>
    <property type="evidence" value="ECO:0007669"/>
    <property type="project" value="UniProtKB-KW"/>
</dbReference>
<dbReference type="GO" id="GO:0031507">
    <property type="term" value="P:heterochromatin formation"/>
    <property type="evidence" value="ECO:0000315"/>
    <property type="project" value="TAIR"/>
</dbReference>
<dbReference type="GO" id="GO:0070828">
    <property type="term" value="P:heterochromatin organization"/>
    <property type="evidence" value="ECO:0000315"/>
    <property type="project" value="TAIR"/>
</dbReference>
<dbReference type="GO" id="GO:0048366">
    <property type="term" value="P:leaf development"/>
    <property type="evidence" value="ECO:0000315"/>
    <property type="project" value="TAIR"/>
</dbReference>
<dbReference type="GO" id="GO:0009555">
    <property type="term" value="P:pollen development"/>
    <property type="evidence" value="ECO:0000315"/>
    <property type="project" value="TAIR"/>
</dbReference>
<dbReference type="GO" id="GO:0045787">
    <property type="term" value="P:positive regulation of cell cycle"/>
    <property type="evidence" value="ECO:0000316"/>
    <property type="project" value="TAIR"/>
</dbReference>
<dbReference type="GO" id="GO:0009909">
    <property type="term" value="P:regulation of flower development"/>
    <property type="evidence" value="ECO:0000315"/>
    <property type="project" value="TAIR"/>
</dbReference>
<dbReference type="GO" id="GO:0010214">
    <property type="term" value="P:seed coat development"/>
    <property type="evidence" value="ECO:0000315"/>
    <property type="project" value="TAIR"/>
</dbReference>
<dbReference type="GO" id="GO:0048316">
    <property type="term" value="P:seed development"/>
    <property type="evidence" value="ECO:0000315"/>
    <property type="project" value="TAIR"/>
</dbReference>
<dbReference type="GO" id="GO:0010026">
    <property type="term" value="P:trichome differentiation"/>
    <property type="evidence" value="ECO:0000315"/>
    <property type="project" value="TAIR"/>
</dbReference>
<dbReference type="FunFam" id="2.130.10.10:FF:000512">
    <property type="entry name" value="WD-40 repeat-containing protein MSI1"/>
    <property type="match status" value="1"/>
</dbReference>
<dbReference type="Gene3D" id="2.130.10.10">
    <property type="entry name" value="YVTN repeat-like/Quinoprotein amine dehydrogenase"/>
    <property type="match status" value="1"/>
</dbReference>
<dbReference type="InterPro" id="IPR020472">
    <property type="entry name" value="G-protein_beta_WD-40_rep"/>
</dbReference>
<dbReference type="InterPro" id="IPR022052">
    <property type="entry name" value="Histone-bd_RBBP4-like_N"/>
</dbReference>
<dbReference type="InterPro" id="IPR015943">
    <property type="entry name" value="WD40/YVTN_repeat-like_dom_sf"/>
</dbReference>
<dbReference type="InterPro" id="IPR019775">
    <property type="entry name" value="WD40_repeat_CS"/>
</dbReference>
<dbReference type="InterPro" id="IPR036322">
    <property type="entry name" value="WD40_repeat_dom_sf"/>
</dbReference>
<dbReference type="InterPro" id="IPR001680">
    <property type="entry name" value="WD40_rpt"/>
</dbReference>
<dbReference type="InterPro" id="IPR050459">
    <property type="entry name" value="WD_repeat_RBAP46/RBAP48/MSI1"/>
</dbReference>
<dbReference type="PANTHER" id="PTHR22850">
    <property type="entry name" value="WD40 REPEAT FAMILY"/>
    <property type="match status" value="1"/>
</dbReference>
<dbReference type="Pfam" id="PF12265">
    <property type="entry name" value="CAF1C_H4-bd"/>
    <property type="match status" value="1"/>
</dbReference>
<dbReference type="Pfam" id="PF00400">
    <property type="entry name" value="WD40"/>
    <property type="match status" value="5"/>
</dbReference>
<dbReference type="PRINTS" id="PR00320">
    <property type="entry name" value="GPROTEINBRPT"/>
</dbReference>
<dbReference type="SMART" id="SM00320">
    <property type="entry name" value="WD40"/>
    <property type="match status" value="6"/>
</dbReference>
<dbReference type="SUPFAM" id="SSF50978">
    <property type="entry name" value="WD40 repeat-like"/>
    <property type="match status" value="1"/>
</dbReference>
<dbReference type="PROSITE" id="PS00678">
    <property type="entry name" value="WD_REPEATS_1"/>
    <property type="match status" value="1"/>
</dbReference>
<dbReference type="PROSITE" id="PS50082">
    <property type="entry name" value="WD_REPEATS_2"/>
    <property type="match status" value="5"/>
</dbReference>
<dbReference type="PROSITE" id="PS50294">
    <property type="entry name" value="WD_REPEATS_REGION"/>
    <property type="match status" value="1"/>
</dbReference>
<keyword id="KW-0143">Chaperone</keyword>
<keyword id="KW-0156">Chromatin regulator</keyword>
<keyword id="KW-0217">Developmental protein</keyword>
<keyword id="KW-0221">Differentiation</keyword>
<keyword id="KW-0227">DNA damage</keyword>
<keyword id="KW-0234">DNA repair</keyword>
<keyword id="KW-0235">DNA replication</keyword>
<keyword id="KW-0287">Flowering</keyword>
<keyword id="KW-0539">Nucleus</keyword>
<keyword id="KW-1185">Reference proteome</keyword>
<keyword id="KW-0677">Repeat</keyword>
<keyword id="KW-0678">Repressor</keyword>
<keyword id="KW-0804">Transcription</keyword>
<keyword id="KW-0805">Transcription regulation</keyword>
<keyword id="KW-0853">WD repeat</keyword>
<reference key="1">
    <citation type="journal article" date="1997" name="Plant Cell">
        <title>A conserved family of WD-40 proteins binds to the retinoblastoma protein in both plants and animals.</title>
        <authorList>
            <person name="Ach R.A."/>
            <person name="Taranto P."/>
            <person name="Gruissem W."/>
        </authorList>
    </citation>
    <scope>NUCLEOTIDE SEQUENCE [MRNA]</scope>
</reference>
<reference key="2">
    <citation type="journal article" date="2000" name="DNA Res.">
        <title>Structural analysis of Arabidopsis thaliana chromosome 5. X. Sequence features of the regions of 3,076,755 bp covered by sixty P1 and TAC clones.</title>
        <authorList>
            <person name="Sato S."/>
            <person name="Nakamura Y."/>
            <person name="Kaneko T."/>
            <person name="Katoh T."/>
            <person name="Asamizu E."/>
            <person name="Kotani H."/>
            <person name="Tabata S."/>
        </authorList>
    </citation>
    <scope>NUCLEOTIDE SEQUENCE [LARGE SCALE GENOMIC DNA]</scope>
    <source>
        <strain>cv. Columbia</strain>
    </source>
</reference>
<reference key="3">
    <citation type="journal article" date="2017" name="Plant J.">
        <title>Araport11: a complete reannotation of the Arabidopsis thaliana reference genome.</title>
        <authorList>
            <person name="Cheng C.Y."/>
            <person name="Krishnakumar V."/>
            <person name="Chan A.P."/>
            <person name="Thibaud-Nissen F."/>
            <person name="Schobel S."/>
            <person name="Town C.D."/>
        </authorList>
    </citation>
    <scope>GENOME REANNOTATION</scope>
    <source>
        <strain>cv. Columbia</strain>
    </source>
</reference>
<reference key="4">
    <citation type="journal article" date="2003" name="Science">
        <title>Empirical analysis of transcriptional activity in the Arabidopsis genome.</title>
        <authorList>
            <person name="Yamada K."/>
            <person name="Lim J."/>
            <person name="Dale J.M."/>
            <person name="Chen H."/>
            <person name="Shinn P."/>
            <person name="Palm C.J."/>
            <person name="Southwick A.M."/>
            <person name="Wu H.C."/>
            <person name="Kim C.J."/>
            <person name="Nguyen M."/>
            <person name="Pham P.K."/>
            <person name="Cheuk R.F."/>
            <person name="Karlin-Newmann G."/>
            <person name="Liu S.X."/>
            <person name="Lam B."/>
            <person name="Sakano H."/>
            <person name="Wu T."/>
            <person name="Yu G."/>
            <person name="Miranda M."/>
            <person name="Quach H.L."/>
            <person name="Tripp M."/>
            <person name="Chang C.H."/>
            <person name="Lee J.M."/>
            <person name="Toriumi M.J."/>
            <person name="Chan M.M."/>
            <person name="Tang C.C."/>
            <person name="Onodera C.S."/>
            <person name="Deng J.M."/>
            <person name="Akiyama K."/>
            <person name="Ansari Y."/>
            <person name="Arakawa T."/>
            <person name="Banh J."/>
            <person name="Banno F."/>
            <person name="Bowser L."/>
            <person name="Brooks S.Y."/>
            <person name="Carninci P."/>
            <person name="Chao Q."/>
            <person name="Choy N."/>
            <person name="Enju A."/>
            <person name="Goldsmith A.D."/>
            <person name="Gurjal M."/>
            <person name="Hansen N.F."/>
            <person name="Hayashizaki Y."/>
            <person name="Johnson-Hopson C."/>
            <person name="Hsuan V.W."/>
            <person name="Iida K."/>
            <person name="Karnes M."/>
            <person name="Khan S."/>
            <person name="Koesema E."/>
            <person name="Ishida J."/>
            <person name="Jiang P.X."/>
            <person name="Jones T."/>
            <person name="Kawai J."/>
            <person name="Kamiya A."/>
            <person name="Meyers C."/>
            <person name="Nakajima M."/>
            <person name="Narusaka M."/>
            <person name="Seki M."/>
            <person name="Sakurai T."/>
            <person name="Satou M."/>
            <person name="Tamse R."/>
            <person name="Vaysberg M."/>
            <person name="Wallender E.K."/>
            <person name="Wong C."/>
            <person name="Yamamura Y."/>
            <person name="Yuan S."/>
            <person name="Shinozaki K."/>
            <person name="Davis R.W."/>
            <person name="Theologis A."/>
            <person name="Ecker J.R."/>
        </authorList>
    </citation>
    <scope>NUCLEOTIDE SEQUENCE [LARGE SCALE MRNA]</scope>
    <source>
        <strain>cv. Columbia</strain>
    </source>
</reference>
<reference key="5">
    <citation type="journal article" date="2001" name="Cell">
        <title>FASCIATA genes for chromatin assembly factor-1 in Arabidopsis maintain the cellular organization of apical meristems.</title>
        <authorList>
            <person name="Kaya H."/>
            <person name="Shibahara K."/>
            <person name="Taoka K."/>
            <person name="Iwabuchi M."/>
            <person name="Stillman B."/>
            <person name="Araki T."/>
        </authorList>
    </citation>
    <scope>FUNCTION</scope>
    <scope>INTERACTION WITH FAS1 AND FAS2</scope>
</reference>
<reference key="6">
    <citation type="journal article" date="2003" name="Development">
        <title>Arabidopsis MSI1 is required for epigenetic maintenance of reproductive development.</title>
        <authorList>
            <person name="Hennig L."/>
            <person name="Taranto P."/>
            <person name="Walser M."/>
            <person name="Schoenrock N."/>
            <person name="Gruissem W."/>
        </authorList>
    </citation>
    <scope>FUNCTION</scope>
    <scope>TISSUE SPECIFICITY</scope>
</reference>
<reference key="7">
    <citation type="journal article" date="2003" name="EMBO J.">
        <title>Arabidopsis MSI1 is a component of the MEA/FIE Polycomb group complex and required for seed development.</title>
        <authorList>
            <person name="Koehler C."/>
            <person name="Hennig L."/>
            <person name="Bouveret R."/>
            <person name="Gheyselinck J."/>
            <person name="Grossniklaus U."/>
            <person name="Gruissem W."/>
        </authorList>
    </citation>
    <scope>FUNCTION</scope>
    <scope>INTERACTION WITH MEA AND FIE</scope>
</reference>
<reference key="8">
    <citation type="journal article" date="2004" name="Development">
        <title>Identification of new members of fertilisation independent seed Polycomb group pathway involved in the control of seed development in Arabidopsis thaliana.</title>
        <authorList>
            <person name="Guitton A.-E."/>
            <person name="Page D.R."/>
            <person name="Chambrier P."/>
            <person name="Lionnet C."/>
            <person name="Faure J.-E."/>
            <person name="Grossniklaus U."/>
            <person name="Berger F."/>
        </authorList>
    </citation>
    <scope>FUNCTION</scope>
</reference>
<reference key="9">
    <citation type="journal article" date="2005" name="Curr. Biol.">
        <title>Loss of function of MULTICOPY SUPPRESSOR OF IRA 1 produces nonviable parthenogenetic embryos in Arabidopsis.</title>
        <authorList>
            <person name="Guitton A.-E."/>
            <person name="Berger F."/>
        </authorList>
    </citation>
    <scope>FUNCTION</scope>
</reference>
<reference key="10">
    <citation type="journal article" date="2006" name="Development">
        <title>Chromatin assembly factor CAF-1 is required for cellular differentiation during plant development.</title>
        <authorList>
            <person name="Exner V."/>
            <person name="Taranto P."/>
            <person name="Schoenrock N."/>
            <person name="Gruissem W."/>
            <person name="Hennig L."/>
        </authorList>
    </citation>
    <scope>FUNCTION</scope>
</reference>
<reference key="11">
    <citation type="journal article" date="2006" name="J. Biol. Chem.">
        <title>Functional genomic analysis of CAF-1 mutants in Arabidopsis thaliana.</title>
        <authorList>
            <person name="Schoenrock N."/>
            <person name="Exner V."/>
            <person name="Probst A."/>
            <person name="Gruissem W."/>
            <person name="Hennig L."/>
        </authorList>
    </citation>
    <scope>FUNCTION</scope>
</reference>
<reference key="12">
    <citation type="journal article" date="2008" name="PLoS Biol.">
        <title>Retinoblastoma and its binding partner MSI1 control imprinting in Arabidopsis.</title>
        <authorList>
            <person name="Jullien P.E."/>
            <person name="Mosquna A."/>
            <person name="Ingouff M."/>
            <person name="Sakata T."/>
            <person name="Ohad N."/>
            <person name="Berger F."/>
        </authorList>
    </citation>
    <scope>FUNCTION</scope>
    <scope>INTERACTION WITH RBR1</scope>
    <scope>DEVELOPMENTAL STAGE</scope>
</reference>
<reference key="13">
    <citation type="journal article" date="2008" name="Plant Cell">
        <title>Characterization of Arabidopsis and rice DWD proteins and their roles as substrate receptors for CUL4-RING E3 ubiquitin ligases.</title>
        <authorList>
            <person name="Lee J.H."/>
            <person name="Terzaghi W."/>
            <person name="Gusmaroli G."/>
            <person name="Charron J.B."/>
            <person name="Yoon H.J."/>
            <person name="Chen H."/>
            <person name="He Y.J."/>
            <person name="Xiong Y."/>
            <person name="Deng X.W."/>
        </authorList>
    </citation>
    <scope>DWD MOTIF</scope>
</reference>
<reference key="14">
    <citation type="journal article" date="2008" name="Development">
        <title>Chromatin assembly factor 1 regulates the cell cycle but not cell fate during male gametogenesis in Arabidopsis thaliana.</title>
        <authorList>
            <person name="Chen Z."/>
            <person name="Tan J.L."/>
            <person name="Ingouff M."/>
            <person name="Sundaresan V."/>
            <person name="Berger F."/>
        </authorList>
    </citation>
    <scope>FUNCTION</scope>
</reference>
<reference key="15">
    <citation type="journal article" date="2008" name="Plant Cell">
        <title>EMBRYONIC FLOWER1 participates in polycomb group-mediated AG gene silencing in Arabidopsis.</title>
        <authorList>
            <person name="Calonje M."/>
            <person name="Sanchez R."/>
            <person name="Chen L."/>
            <person name="Sung Z.R."/>
        </authorList>
    </citation>
    <scope>INTERACTION WITH EMF1</scope>
</reference>
<reference key="16">
    <citation type="journal article" date="2008" name="Proc. Natl. Acad. Sci. U.S.A.">
        <title>A PHD-polycomb repressive complex 2 triggers the epigenetic silencing of FLC during vernalization.</title>
        <authorList>
            <person name="De Lucia F."/>
            <person name="Crevillen P."/>
            <person name="Jones A.M.E."/>
            <person name="Greb T."/>
            <person name="Dean C."/>
        </authorList>
    </citation>
    <scope>SUBUNIT</scope>
    <scope>IDENTIFICATION BY MASS SPECTROMETRY</scope>
</reference>
<reference key="17">
    <citation type="journal article" date="2015" name="PLoS Genet.">
        <title>Kicking against the PRCs - A domesticated transposase antagonises silencing mediated by polycomb group proteins and is an accessory component of polycomb repressive complex 2.</title>
        <authorList>
            <person name="Liang S.C."/>
            <person name="Hartwig B."/>
            <person name="Perera P."/>
            <person name="Mora-Garcia S."/>
            <person name="de Leau E."/>
            <person name="Thornton H."/>
            <person name="de Lima Alves F."/>
            <person name="de Alves F.L."/>
            <person name="Rappsilber J."/>
            <person name="Rapsilber J."/>
            <person name="Yang S."/>
            <person name="James G.V."/>
            <person name="Schneeberger K."/>
            <person name="Finnegan E.J."/>
            <person name="Turck F."/>
            <person name="Goodrich J."/>
        </authorList>
    </citation>
    <scope>INTERACTION WITH ALP1</scope>
</reference>
<proteinExistence type="evidence at protein level"/>